<organism>
    <name type="scientific">Bacillus subtilis (strain 168)</name>
    <dbReference type="NCBI Taxonomy" id="224308"/>
    <lineage>
        <taxon>Bacteria</taxon>
        <taxon>Bacillati</taxon>
        <taxon>Bacillota</taxon>
        <taxon>Bacilli</taxon>
        <taxon>Bacillales</taxon>
        <taxon>Bacillaceae</taxon>
        <taxon>Bacillus</taxon>
    </lineage>
</organism>
<accession>O31561</accession>
<accession>Q79EW8</accession>
<dbReference type="EMBL" id="D85082">
    <property type="protein sequence ID" value="BAA24459.1"/>
    <property type="molecule type" value="Genomic_DNA"/>
</dbReference>
<dbReference type="EMBL" id="AL009126">
    <property type="protein sequence ID" value="CAB12667.1"/>
    <property type="molecule type" value="Genomic_DNA"/>
</dbReference>
<dbReference type="PIR" id="E69804">
    <property type="entry name" value="E69804"/>
</dbReference>
<dbReference type="RefSeq" id="NP_388719.1">
    <property type="nucleotide sequence ID" value="NC_000964.3"/>
</dbReference>
<dbReference type="RefSeq" id="WP_003242507.1">
    <property type="nucleotide sequence ID" value="NZ_OZ025638.1"/>
</dbReference>
<dbReference type="SMR" id="O31561"/>
<dbReference type="FunCoup" id="O31561">
    <property type="interactions" value="189"/>
</dbReference>
<dbReference type="STRING" id="224308.BSU08380"/>
<dbReference type="TCDB" id="2.A.1.31.3">
    <property type="family name" value="the major facilitator superfamily (mfs)"/>
</dbReference>
<dbReference type="PaxDb" id="224308-BSU08380"/>
<dbReference type="EnsemblBacteria" id="CAB12667">
    <property type="protein sequence ID" value="CAB12667"/>
    <property type="gene ID" value="BSU_08380"/>
</dbReference>
<dbReference type="GeneID" id="939219"/>
<dbReference type="KEGG" id="bsu:BSU08380"/>
<dbReference type="PATRIC" id="fig|224308.179.peg.906"/>
<dbReference type="eggNOG" id="COG2814">
    <property type="taxonomic scope" value="Bacteria"/>
</dbReference>
<dbReference type="InParanoid" id="O31561"/>
<dbReference type="OrthoDB" id="9775268at2"/>
<dbReference type="PhylomeDB" id="O31561"/>
<dbReference type="BioCyc" id="BSUB:BSU08380-MONOMER"/>
<dbReference type="Proteomes" id="UP000001570">
    <property type="component" value="Chromosome"/>
</dbReference>
<dbReference type="GO" id="GO:0005886">
    <property type="term" value="C:plasma membrane"/>
    <property type="evidence" value="ECO:0007669"/>
    <property type="project" value="UniProtKB-SubCell"/>
</dbReference>
<dbReference type="GO" id="GO:0022857">
    <property type="term" value="F:transmembrane transporter activity"/>
    <property type="evidence" value="ECO:0007669"/>
    <property type="project" value="InterPro"/>
</dbReference>
<dbReference type="CDD" id="cd06173">
    <property type="entry name" value="MFS_MefA_like"/>
    <property type="match status" value="1"/>
</dbReference>
<dbReference type="Gene3D" id="1.20.1250.20">
    <property type="entry name" value="MFS general substrate transporter like domains"/>
    <property type="match status" value="1"/>
</dbReference>
<dbReference type="InterPro" id="IPR011701">
    <property type="entry name" value="MFS"/>
</dbReference>
<dbReference type="InterPro" id="IPR020846">
    <property type="entry name" value="MFS_dom"/>
</dbReference>
<dbReference type="InterPro" id="IPR036259">
    <property type="entry name" value="MFS_trans_sf"/>
</dbReference>
<dbReference type="PANTHER" id="PTHR43266">
    <property type="entry name" value="MACROLIDE-EFFLUX PROTEIN"/>
    <property type="match status" value="1"/>
</dbReference>
<dbReference type="PANTHER" id="PTHR43266:SF2">
    <property type="entry name" value="MAJOR FACILITATOR SUPERFAMILY (MFS) PROFILE DOMAIN-CONTAINING PROTEIN"/>
    <property type="match status" value="1"/>
</dbReference>
<dbReference type="Pfam" id="PF07690">
    <property type="entry name" value="MFS_1"/>
    <property type="match status" value="1"/>
</dbReference>
<dbReference type="SUPFAM" id="SSF103473">
    <property type="entry name" value="MFS general substrate transporter"/>
    <property type="match status" value="1"/>
</dbReference>
<dbReference type="PROSITE" id="PS50850">
    <property type="entry name" value="MFS"/>
    <property type="match status" value="1"/>
</dbReference>
<protein>
    <recommendedName>
        <fullName>Uncharacterized MFS-type transporter YfiS</fullName>
    </recommendedName>
</protein>
<feature type="chain" id="PRO_0000351510" description="Uncharacterized MFS-type transporter YfiS">
    <location>
        <begin position="1"/>
        <end position="417"/>
    </location>
</feature>
<feature type="transmembrane region" description="Helical" evidence="1">
    <location>
        <begin position="21"/>
        <end position="41"/>
    </location>
</feature>
<feature type="transmembrane region" description="Helical" evidence="1">
    <location>
        <begin position="50"/>
        <end position="70"/>
    </location>
</feature>
<feature type="transmembrane region" description="Helical" evidence="1">
    <location>
        <begin position="88"/>
        <end position="108"/>
    </location>
</feature>
<feature type="transmembrane region" description="Helical" evidence="1">
    <location>
        <begin position="166"/>
        <end position="186"/>
    </location>
</feature>
<feature type="transmembrane region" description="Helical" evidence="1">
    <location>
        <begin position="217"/>
        <end position="237"/>
    </location>
</feature>
<feature type="transmembrane region" description="Helical" evidence="1">
    <location>
        <begin position="255"/>
        <end position="275"/>
    </location>
</feature>
<feature type="transmembrane region" description="Helical" evidence="1">
    <location>
        <begin position="283"/>
        <end position="303"/>
    </location>
</feature>
<feature type="transmembrane region" description="Helical" evidence="1">
    <location>
        <begin position="308"/>
        <end position="328"/>
    </location>
</feature>
<feature type="transmembrane region" description="Helical" evidence="1">
    <location>
        <begin position="351"/>
        <end position="371"/>
    </location>
</feature>
<feature type="transmembrane region" description="Helical" evidence="1">
    <location>
        <begin position="373"/>
        <end position="393"/>
    </location>
</feature>
<proteinExistence type="inferred from homology"/>
<gene>
    <name type="primary">yfiS</name>
    <name type="ordered locus">BSU08380</name>
</gene>
<name>YFIS_BACSU</name>
<reference key="1">
    <citation type="journal article" date="1996" name="DNA Res.">
        <title>Cloning and sequencing of a 27.8-kb nucleotide sequence of the 79 degrees-81 degrees region of the Bacillus subtilis genome containing the sspE locus.</title>
        <authorList>
            <person name="Yamamoto H."/>
            <person name="Uchiyama S."/>
            <person name="Sekiguchi J."/>
        </authorList>
    </citation>
    <scope>NUCLEOTIDE SEQUENCE [GENOMIC DNA]</scope>
</reference>
<reference key="2">
    <citation type="journal article" date="1997" name="Nature">
        <title>The complete genome sequence of the Gram-positive bacterium Bacillus subtilis.</title>
        <authorList>
            <person name="Kunst F."/>
            <person name="Ogasawara N."/>
            <person name="Moszer I."/>
            <person name="Albertini A.M."/>
            <person name="Alloni G."/>
            <person name="Azevedo V."/>
            <person name="Bertero M.G."/>
            <person name="Bessieres P."/>
            <person name="Bolotin A."/>
            <person name="Borchert S."/>
            <person name="Borriss R."/>
            <person name="Boursier L."/>
            <person name="Brans A."/>
            <person name="Braun M."/>
            <person name="Brignell S.C."/>
            <person name="Bron S."/>
            <person name="Brouillet S."/>
            <person name="Bruschi C.V."/>
            <person name="Caldwell B."/>
            <person name="Capuano V."/>
            <person name="Carter N.M."/>
            <person name="Choi S.-K."/>
            <person name="Codani J.-J."/>
            <person name="Connerton I.F."/>
            <person name="Cummings N.J."/>
            <person name="Daniel R.A."/>
            <person name="Denizot F."/>
            <person name="Devine K.M."/>
            <person name="Duesterhoeft A."/>
            <person name="Ehrlich S.D."/>
            <person name="Emmerson P.T."/>
            <person name="Entian K.-D."/>
            <person name="Errington J."/>
            <person name="Fabret C."/>
            <person name="Ferrari E."/>
            <person name="Foulger D."/>
            <person name="Fritz C."/>
            <person name="Fujita M."/>
            <person name="Fujita Y."/>
            <person name="Fuma S."/>
            <person name="Galizzi A."/>
            <person name="Galleron N."/>
            <person name="Ghim S.-Y."/>
            <person name="Glaser P."/>
            <person name="Goffeau A."/>
            <person name="Golightly E.J."/>
            <person name="Grandi G."/>
            <person name="Guiseppi G."/>
            <person name="Guy B.J."/>
            <person name="Haga K."/>
            <person name="Haiech J."/>
            <person name="Harwood C.R."/>
            <person name="Henaut A."/>
            <person name="Hilbert H."/>
            <person name="Holsappel S."/>
            <person name="Hosono S."/>
            <person name="Hullo M.-F."/>
            <person name="Itaya M."/>
            <person name="Jones L.-M."/>
            <person name="Joris B."/>
            <person name="Karamata D."/>
            <person name="Kasahara Y."/>
            <person name="Klaerr-Blanchard M."/>
            <person name="Klein C."/>
            <person name="Kobayashi Y."/>
            <person name="Koetter P."/>
            <person name="Koningstein G."/>
            <person name="Krogh S."/>
            <person name="Kumano M."/>
            <person name="Kurita K."/>
            <person name="Lapidus A."/>
            <person name="Lardinois S."/>
            <person name="Lauber J."/>
            <person name="Lazarevic V."/>
            <person name="Lee S.-M."/>
            <person name="Levine A."/>
            <person name="Liu H."/>
            <person name="Masuda S."/>
            <person name="Mauel C."/>
            <person name="Medigue C."/>
            <person name="Medina N."/>
            <person name="Mellado R.P."/>
            <person name="Mizuno M."/>
            <person name="Moestl D."/>
            <person name="Nakai S."/>
            <person name="Noback M."/>
            <person name="Noone D."/>
            <person name="O'Reilly M."/>
            <person name="Ogawa K."/>
            <person name="Ogiwara A."/>
            <person name="Oudega B."/>
            <person name="Park S.-H."/>
            <person name="Parro V."/>
            <person name="Pohl T.M."/>
            <person name="Portetelle D."/>
            <person name="Porwollik S."/>
            <person name="Prescott A.M."/>
            <person name="Presecan E."/>
            <person name="Pujic P."/>
            <person name="Purnelle B."/>
            <person name="Rapoport G."/>
            <person name="Rey M."/>
            <person name="Reynolds S."/>
            <person name="Rieger M."/>
            <person name="Rivolta C."/>
            <person name="Rocha E."/>
            <person name="Roche B."/>
            <person name="Rose M."/>
            <person name="Sadaie Y."/>
            <person name="Sato T."/>
            <person name="Scanlan E."/>
            <person name="Schleich S."/>
            <person name="Schroeter R."/>
            <person name="Scoffone F."/>
            <person name="Sekiguchi J."/>
            <person name="Sekowska A."/>
            <person name="Seror S.J."/>
            <person name="Serror P."/>
            <person name="Shin B.-S."/>
            <person name="Soldo B."/>
            <person name="Sorokin A."/>
            <person name="Tacconi E."/>
            <person name="Takagi T."/>
            <person name="Takahashi H."/>
            <person name="Takemaru K."/>
            <person name="Takeuchi M."/>
            <person name="Tamakoshi A."/>
            <person name="Tanaka T."/>
            <person name="Terpstra P."/>
            <person name="Tognoni A."/>
            <person name="Tosato V."/>
            <person name="Uchiyama S."/>
            <person name="Vandenbol M."/>
            <person name="Vannier F."/>
            <person name="Vassarotti A."/>
            <person name="Viari A."/>
            <person name="Wambutt R."/>
            <person name="Wedler E."/>
            <person name="Wedler H."/>
            <person name="Weitzenegger T."/>
            <person name="Winters P."/>
            <person name="Wipat A."/>
            <person name="Yamamoto H."/>
            <person name="Yamane K."/>
            <person name="Yasumoto K."/>
            <person name="Yata K."/>
            <person name="Yoshida K."/>
            <person name="Yoshikawa H.-F."/>
            <person name="Zumstein E."/>
            <person name="Yoshikawa H."/>
            <person name="Danchin A."/>
        </authorList>
    </citation>
    <scope>NUCLEOTIDE SEQUENCE [LARGE SCALE GENOMIC DNA]</scope>
    <source>
        <strain>168</strain>
    </source>
</reference>
<keyword id="KW-1003">Cell membrane</keyword>
<keyword id="KW-0472">Membrane</keyword>
<keyword id="KW-1185">Reference proteome</keyword>
<keyword id="KW-0812">Transmembrane</keyword>
<keyword id="KW-1133">Transmembrane helix</keyword>
<keyword id="KW-0813">Transport</keyword>
<comment type="subcellular location">
    <subcellularLocation>
        <location evidence="2">Cell membrane</location>
        <topology evidence="2">Multi-pass membrane protein</topology>
    </subcellularLocation>
</comment>
<comment type="similarity">
    <text evidence="2">Belongs to the major facilitator superfamily. TCR/Tet family.</text>
</comment>
<evidence type="ECO:0000255" key="1"/>
<evidence type="ECO:0000305" key="2"/>
<sequence>MEKPLFRNQKGLMTLLASQTISSLGDWLHILAVLTLAAFQLHASPLDMSLLMMSFALPVIVLGPVSGLLADRFDRKTIMFLSEIGRALTVISCVYVSELWQLYVLLSVQSCFSSLFLPAKNGKLKELAPEAHIQQAVSVSSIIDNSSKIFGPALGGTLIAAFSIHSVFYINAGAFFLSAVILFFLPRDAFLQKANTPQEKTAALTSIKEGLQFLKRMPLLLTGLLTACVVLFVLQIGDSQAIILIRSFSGAPPELAGWCMAVSGAGMLLTAAITGRRRITSYLLYFSAGTLLLGLATGGAPFLSGMGIAGITLFIFAFFIMGAAFGLVHIPFQILVQTTVPVDYSGRVFGAIQSATTLASILGMAGGGVLAEWIGVSLAFLVCGCLLIMIGLITLIGKKIAESRRYLVTKSNKGAQG</sequence>